<feature type="chain" id="PRO_1000010736" description="Elongation factor P">
    <location>
        <begin position="1"/>
        <end position="188"/>
    </location>
</feature>
<feature type="modified residue" description="N6-(3,6-diaminohexanoyl)-5-hydroxylysine" evidence="1">
    <location>
        <position position="34"/>
    </location>
</feature>
<reference key="1">
    <citation type="journal article" date="2006" name="Proc. Natl. Acad. Sci. U.S.A.">
        <title>Identification of genes subject to positive selection in uropathogenic strains of Escherichia coli: a comparative genomics approach.</title>
        <authorList>
            <person name="Chen S.L."/>
            <person name="Hung C.-S."/>
            <person name="Xu J."/>
            <person name="Reigstad C.S."/>
            <person name="Magrini V."/>
            <person name="Sabo A."/>
            <person name="Blasiar D."/>
            <person name="Bieri T."/>
            <person name="Meyer R.R."/>
            <person name="Ozersky P."/>
            <person name="Armstrong J.R."/>
            <person name="Fulton R.S."/>
            <person name="Latreille J.P."/>
            <person name="Spieth J."/>
            <person name="Hooton T.M."/>
            <person name="Mardis E.R."/>
            <person name="Hultgren S.J."/>
            <person name="Gordon J.I."/>
        </authorList>
    </citation>
    <scope>NUCLEOTIDE SEQUENCE [LARGE SCALE GENOMIC DNA]</scope>
    <source>
        <strain>UTI89 / UPEC</strain>
    </source>
</reference>
<evidence type="ECO:0000255" key="1">
    <source>
        <dbReference type="HAMAP-Rule" id="MF_00141"/>
    </source>
</evidence>
<protein>
    <recommendedName>
        <fullName evidence="1">Elongation factor P</fullName>
        <shortName evidence="1">EF-P</shortName>
    </recommendedName>
</protein>
<sequence>MATYYSNDFRAGLKIMLDGEPYAVEASEFVKPGKGQAFARVKLRRLLTGTRVEKTFKSTDSAEGADVVDMNLTYLYNDGEFWHFMNNETFEQLSADAKAIGDNAKWLLDQAECIVTLWNGQPISVTPPNFVELEIVDTDPGLKGDTAGTGGKPATLSTGAVVKVPLFVQIGEVIKVDTRSGEYVSRVK</sequence>
<dbReference type="EMBL" id="CP000243">
    <property type="protein sequence ID" value="ABE10152.1"/>
    <property type="molecule type" value="Genomic_DNA"/>
</dbReference>
<dbReference type="RefSeq" id="WP_000257278.1">
    <property type="nucleotide sequence ID" value="NZ_CP064825.1"/>
</dbReference>
<dbReference type="SMR" id="Q1R3B2"/>
<dbReference type="GeneID" id="93777677"/>
<dbReference type="KEGG" id="eci:UTI89_C4745"/>
<dbReference type="HOGENOM" id="CLU_074944_0_0_6"/>
<dbReference type="UniPathway" id="UPA00345"/>
<dbReference type="Proteomes" id="UP000001952">
    <property type="component" value="Chromosome"/>
</dbReference>
<dbReference type="GO" id="GO:0005829">
    <property type="term" value="C:cytosol"/>
    <property type="evidence" value="ECO:0007669"/>
    <property type="project" value="UniProtKB-ARBA"/>
</dbReference>
<dbReference type="GO" id="GO:0003746">
    <property type="term" value="F:translation elongation factor activity"/>
    <property type="evidence" value="ECO:0007669"/>
    <property type="project" value="UniProtKB-UniRule"/>
</dbReference>
<dbReference type="GO" id="GO:0043043">
    <property type="term" value="P:peptide biosynthetic process"/>
    <property type="evidence" value="ECO:0007669"/>
    <property type="project" value="InterPro"/>
</dbReference>
<dbReference type="CDD" id="cd04470">
    <property type="entry name" value="S1_EF-P_repeat_1"/>
    <property type="match status" value="1"/>
</dbReference>
<dbReference type="CDD" id="cd05794">
    <property type="entry name" value="S1_EF-P_repeat_2"/>
    <property type="match status" value="1"/>
</dbReference>
<dbReference type="FunFam" id="2.30.30.30:FF:000003">
    <property type="entry name" value="Elongation factor P"/>
    <property type="match status" value="1"/>
</dbReference>
<dbReference type="FunFam" id="2.40.50.140:FF:000004">
    <property type="entry name" value="Elongation factor P"/>
    <property type="match status" value="1"/>
</dbReference>
<dbReference type="FunFam" id="2.40.50.140:FF:000009">
    <property type="entry name" value="Elongation factor P"/>
    <property type="match status" value="1"/>
</dbReference>
<dbReference type="Gene3D" id="2.30.30.30">
    <property type="match status" value="1"/>
</dbReference>
<dbReference type="Gene3D" id="2.40.50.140">
    <property type="entry name" value="Nucleic acid-binding proteins"/>
    <property type="match status" value="2"/>
</dbReference>
<dbReference type="HAMAP" id="MF_00141">
    <property type="entry name" value="EF_P"/>
    <property type="match status" value="1"/>
</dbReference>
<dbReference type="InterPro" id="IPR015365">
    <property type="entry name" value="Elong-fact-P_C"/>
</dbReference>
<dbReference type="InterPro" id="IPR012340">
    <property type="entry name" value="NA-bd_OB-fold"/>
</dbReference>
<dbReference type="InterPro" id="IPR014722">
    <property type="entry name" value="Rib_uL2_dom2"/>
</dbReference>
<dbReference type="InterPro" id="IPR020599">
    <property type="entry name" value="Transl_elong_fac_P/YeiP"/>
</dbReference>
<dbReference type="InterPro" id="IPR013185">
    <property type="entry name" value="Transl_elong_KOW-like"/>
</dbReference>
<dbReference type="InterPro" id="IPR001059">
    <property type="entry name" value="Transl_elong_P/YeiP_cen"/>
</dbReference>
<dbReference type="InterPro" id="IPR013852">
    <property type="entry name" value="Transl_elong_P/YeiP_CS"/>
</dbReference>
<dbReference type="InterPro" id="IPR011768">
    <property type="entry name" value="Transl_elongation_fac_P"/>
</dbReference>
<dbReference type="InterPro" id="IPR008991">
    <property type="entry name" value="Translation_prot_SH3-like_sf"/>
</dbReference>
<dbReference type="NCBIfam" id="TIGR00038">
    <property type="entry name" value="efp"/>
    <property type="match status" value="1"/>
</dbReference>
<dbReference type="NCBIfam" id="NF001810">
    <property type="entry name" value="PRK00529.1"/>
    <property type="match status" value="1"/>
</dbReference>
<dbReference type="PANTHER" id="PTHR30053">
    <property type="entry name" value="ELONGATION FACTOR P"/>
    <property type="match status" value="1"/>
</dbReference>
<dbReference type="PANTHER" id="PTHR30053:SF12">
    <property type="entry name" value="ELONGATION FACTOR P (EF-P) FAMILY PROTEIN"/>
    <property type="match status" value="1"/>
</dbReference>
<dbReference type="Pfam" id="PF01132">
    <property type="entry name" value="EFP"/>
    <property type="match status" value="1"/>
</dbReference>
<dbReference type="Pfam" id="PF08207">
    <property type="entry name" value="EFP_N"/>
    <property type="match status" value="1"/>
</dbReference>
<dbReference type="Pfam" id="PF09285">
    <property type="entry name" value="Elong-fact-P_C"/>
    <property type="match status" value="1"/>
</dbReference>
<dbReference type="PIRSF" id="PIRSF005901">
    <property type="entry name" value="EF-P"/>
    <property type="match status" value="1"/>
</dbReference>
<dbReference type="SMART" id="SM01185">
    <property type="entry name" value="EFP"/>
    <property type="match status" value="1"/>
</dbReference>
<dbReference type="SMART" id="SM00841">
    <property type="entry name" value="Elong-fact-P_C"/>
    <property type="match status" value="1"/>
</dbReference>
<dbReference type="SUPFAM" id="SSF50249">
    <property type="entry name" value="Nucleic acid-binding proteins"/>
    <property type="match status" value="2"/>
</dbReference>
<dbReference type="SUPFAM" id="SSF50104">
    <property type="entry name" value="Translation proteins SH3-like domain"/>
    <property type="match status" value="1"/>
</dbReference>
<dbReference type="PROSITE" id="PS01275">
    <property type="entry name" value="EFP"/>
    <property type="match status" value="1"/>
</dbReference>
<proteinExistence type="inferred from homology"/>
<organism>
    <name type="scientific">Escherichia coli (strain UTI89 / UPEC)</name>
    <dbReference type="NCBI Taxonomy" id="364106"/>
    <lineage>
        <taxon>Bacteria</taxon>
        <taxon>Pseudomonadati</taxon>
        <taxon>Pseudomonadota</taxon>
        <taxon>Gammaproteobacteria</taxon>
        <taxon>Enterobacterales</taxon>
        <taxon>Enterobacteriaceae</taxon>
        <taxon>Escherichia</taxon>
    </lineage>
</organism>
<comment type="function">
    <text evidence="1">Involved in peptide bond synthesis. Alleviates ribosome stalling that occurs when 3 or more consecutive Pro residues or the sequence PPG is present in a protein, possibly by augmenting the peptidyl transferase activity of the ribosome. Modification of Lys-34 is required for alleviation.</text>
</comment>
<comment type="pathway">
    <text evidence="1">Protein biosynthesis; polypeptide chain elongation.</text>
</comment>
<comment type="subcellular location">
    <subcellularLocation>
        <location evidence="1">Cytoplasm</location>
    </subcellularLocation>
</comment>
<comment type="PTM">
    <text evidence="1">Is beta-lysylated on the epsilon-amino group of Lys-34 by the combined action of EpmA and EpmB, and then hydroxylated on the C5 position of the same residue by EpmC. Lysylation is critical for the stimulatory effect of EF-P on peptide-bond formation. The lysylation moiety would extend toward the peptidyltransferase center and stabilize the terminal 3-CCA end of the tRNA. The hydroxylation of the C5 position on Lys-34 would allow additional potential stabilizing hydrogen-bond interactions with the P-tRNA.</text>
</comment>
<comment type="similarity">
    <text evidence="1">Belongs to the elongation factor P family.</text>
</comment>
<name>EFP_ECOUT</name>
<accession>Q1R3B2</accession>
<gene>
    <name evidence="1" type="primary">efp</name>
    <name type="ordered locus">UTI89_C4745</name>
</gene>
<keyword id="KW-0963">Cytoplasm</keyword>
<keyword id="KW-0251">Elongation factor</keyword>
<keyword id="KW-0379">Hydroxylation</keyword>
<keyword id="KW-0648">Protein biosynthesis</keyword>